<gene>
    <name type="primary">VAB2</name>
    <name type="ORF">Kpol_499p19</name>
</gene>
<protein>
    <recommendedName>
        <fullName>Biogenesis of lysosome-related organelles complex 1 subunit VAB2</fullName>
        <shortName>BLOC-1 subunit VAB2</shortName>
    </recommendedName>
</protein>
<feature type="chain" id="PRO_0000320514" description="Biogenesis of lysosome-related organelles complex 1 subunit VAB2">
    <location>
        <begin position="1"/>
        <end position="352"/>
    </location>
</feature>
<feature type="region of interest" description="Disordered" evidence="3">
    <location>
        <begin position="299"/>
        <end position="318"/>
    </location>
</feature>
<feature type="coiled-coil region" evidence="2">
    <location>
        <begin position="57"/>
        <end position="133"/>
    </location>
</feature>
<feature type="compositionally biased region" description="Basic and acidic residues" evidence="3">
    <location>
        <begin position="299"/>
        <end position="308"/>
    </location>
</feature>
<feature type="compositionally biased region" description="Polar residues" evidence="3">
    <location>
        <begin position="309"/>
        <end position="318"/>
    </location>
</feature>
<sequence>MRNKLNFQNIEHSYAFKELSKLPSIVSSKQLRTNSIFEAVKPELKNVQNDIQMFYSVIEREINSEISQIDLVETELKKSLKNVNKSYAKIMKRRTILSSNGKNKNLAIVDDFNKEVDGLESLITGLKETVHDMIDDLVTADSQLKSNNKSVTKEEINSQHYPLLFEILQKDYNHIFKESNNLSVQDADRKSIELDIEDRTEVKSSDDKDSMNKNINIMPIEDNSITHLSFEGEPIYTKVSHENSNQVTDKGINQLDENTLNQEIKNDNLICQRSLPPKNLSNENVVNDNYADSNCLKEEKKNEVDTSKSKMGTINSTPSSTTMGNGFILPNLTKVVKPTISTTFETVVNREF</sequence>
<evidence type="ECO:0000250" key="1"/>
<evidence type="ECO:0000255" key="2"/>
<evidence type="ECO:0000256" key="3">
    <source>
        <dbReference type="SAM" id="MobiDB-lite"/>
    </source>
</evidence>
<evidence type="ECO:0000305" key="4"/>
<comment type="function">
    <text evidence="1">Component of the biogenesis of lysosome-related organelles complex-1 (BLOC-1) involved in endosomal cargo sorting.</text>
</comment>
<comment type="subunit">
    <text evidence="1">Component of the biogenesis of lysosome-related organelles complex-1 (BLOC-1) composed of at least BLI1, BLS1, CNL1, KXD1, SNN1 and VAB2.</text>
</comment>
<comment type="subcellular location">
    <subcellularLocation>
        <location evidence="1">Cytoplasmic vesicle</location>
    </subcellularLocation>
    <subcellularLocation>
        <location evidence="1">Vacuole</location>
    </subcellularLocation>
    <subcellularLocation>
        <location evidence="1">Cytoplasm</location>
    </subcellularLocation>
</comment>
<comment type="similarity">
    <text evidence="4">Belongs to the VAB2 family.</text>
</comment>
<dbReference type="EMBL" id="DS480437">
    <property type="protein sequence ID" value="EDO15991.1"/>
    <property type="molecule type" value="Genomic_DNA"/>
</dbReference>
<dbReference type="RefSeq" id="XP_001643849.1">
    <property type="nucleotide sequence ID" value="XM_001643799.1"/>
</dbReference>
<dbReference type="SMR" id="A7TP22"/>
<dbReference type="STRING" id="436907.A7TP22"/>
<dbReference type="GeneID" id="5544099"/>
<dbReference type="KEGG" id="vpo:Kpol_499p19"/>
<dbReference type="eggNOG" id="ENOG502S95F">
    <property type="taxonomic scope" value="Eukaryota"/>
</dbReference>
<dbReference type="HOGENOM" id="CLU_788007_0_0_1"/>
<dbReference type="InParanoid" id="A7TP22"/>
<dbReference type="OrthoDB" id="4036527at2759"/>
<dbReference type="PhylomeDB" id="A7TP22"/>
<dbReference type="Proteomes" id="UP000000267">
    <property type="component" value="Unassembled WGS sequence"/>
</dbReference>
<dbReference type="GO" id="GO:0031410">
    <property type="term" value="C:cytoplasmic vesicle"/>
    <property type="evidence" value="ECO:0007669"/>
    <property type="project" value="UniProtKB-KW"/>
</dbReference>
<dbReference type="GO" id="GO:0005773">
    <property type="term" value="C:vacuole"/>
    <property type="evidence" value="ECO:0007669"/>
    <property type="project" value="UniProtKB-SubCell"/>
</dbReference>
<proteinExistence type="inferred from homology"/>
<name>VAB2_VANPO</name>
<accession>A7TP22</accession>
<keyword id="KW-0175">Coiled coil</keyword>
<keyword id="KW-0963">Cytoplasm</keyword>
<keyword id="KW-0968">Cytoplasmic vesicle</keyword>
<keyword id="KW-1185">Reference proteome</keyword>
<keyword id="KW-0813">Transport</keyword>
<keyword id="KW-0926">Vacuole</keyword>
<organism>
    <name type="scientific">Vanderwaltozyma polyspora (strain ATCC 22028 / DSM 70294 / BCRC 21397 / CBS 2163 / NBRC 10782 / NRRL Y-8283 / UCD 57-17)</name>
    <name type="common">Kluyveromyces polysporus</name>
    <dbReference type="NCBI Taxonomy" id="436907"/>
    <lineage>
        <taxon>Eukaryota</taxon>
        <taxon>Fungi</taxon>
        <taxon>Dikarya</taxon>
        <taxon>Ascomycota</taxon>
        <taxon>Saccharomycotina</taxon>
        <taxon>Saccharomycetes</taxon>
        <taxon>Saccharomycetales</taxon>
        <taxon>Saccharomycetaceae</taxon>
        <taxon>Vanderwaltozyma</taxon>
    </lineage>
</organism>
<reference key="1">
    <citation type="journal article" date="2007" name="Proc. Natl. Acad. Sci. U.S.A.">
        <title>Independent sorting-out of thousands of duplicated gene pairs in two yeast species descended from a whole-genome duplication.</title>
        <authorList>
            <person name="Scannell D.R."/>
            <person name="Frank A.C."/>
            <person name="Conant G.C."/>
            <person name="Byrne K.P."/>
            <person name="Woolfit M."/>
            <person name="Wolfe K.H."/>
        </authorList>
    </citation>
    <scope>NUCLEOTIDE SEQUENCE [LARGE SCALE GENOMIC DNA]</scope>
    <source>
        <strain>ATCC 22028 / DSM 70294 / BCRC 21397 / CBS 2163 / NBRC 10782 / NRRL Y-8283 / UCD 57-17</strain>
    </source>
</reference>